<accession>Q6F7R8</accession>
<sequence length="250" mass="27981">MGQKVHPIGIRLGVVKRHNANWYANPKQYAEYLLKDLQVREFLTKKLKSAMVSNILIERPTGAAKVTISTARPGIVIGKKGEDIEKLQRELTNIMGVPAQVSINEIDRPDLDARLVAEAIASQLEKRVMFRRAMKRAVQNSMRAGAKGIKVEVSGRLGGAEIARTEWYREGRVPLHTLRADIDYATMRAETTYGTIGVKVWIFRGEILGGMKQVMNPAPQEERPAKRGRGRGEGQERRGRRSDRAADKGE</sequence>
<gene>
    <name evidence="1" type="primary">rpsC</name>
    <name type="ordered locus">ACIAD3213</name>
</gene>
<organism>
    <name type="scientific">Acinetobacter baylyi (strain ATCC 33305 / BD413 / ADP1)</name>
    <dbReference type="NCBI Taxonomy" id="62977"/>
    <lineage>
        <taxon>Bacteria</taxon>
        <taxon>Pseudomonadati</taxon>
        <taxon>Pseudomonadota</taxon>
        <taxon>Gammaproteobacteria</taxon>
        <taxon>Moraxellales</taxon>
        <taxon>Moraxellaceae</taxon>
        <taxon>Acinetobacter</taxon>
    </lineage>
</organism>
<dbReference type="EMBL" id="CR543861">
    <property type="protein sequence ID" value="CAG69897.1"/>
    <property type="molecule type" value="Genomic_DNA"/>
</dbReference>
<dbReference type="SMR" id="Q6F7R8"/>
<dbReference type="STRING" id="202950.GCA_001485005_02942"/>
<dbReference type="KEGG" id="aci:ACIAD3213"/>
<dbReference type="eggNOG" id="COG0092">
    <property type="taxonomic scope" value="Bacteria"/>
</dbReference>
<dbReference type="HOGENOM" id="CLU_058591_0_2_6"/>
<dbReference type="OrthoDB" id="9806396at2"/>
<dbReference type="BioCyc" id="ASP62977:ACIAD_RS14565-MONOMER"/>
<dbReference type="Proteomes" id="UP000000430">
    <property type="component" value="Chromosome"/>
</dbReference>
<dbReference type="GO" id="GO:0022627">
    <property type="term" value="C:cytosolic small ribosomal subunit"/>
    <property type="evidence" value="ECO:0007669"/>
    <property type="project" value="TreeGrafter"/>
</dbReference>
<dbReference type="GO" id="GO:0003729">
    <property type="term" value="F:mRNA binding"/>
    <property type="evidence" value="ECO:0007669"/>
    <property type="project" value="UniProtKB-UniRule"/>
</dbReference>
<dbReference type="GO" id="GO:0019843">
    <property type="term" value="F:rRNA binding"/>
    <property type="evidence" value="ECO:0007669"/>
    <property type="project" value="UniProtKB-UniRule"/>
</dbReference>
<dbReference type="GO" id="GO:0003735">
    <property type="term" value="F:structural constituent of ribosome"/>
    <property type="evidence" value="ECO:0007669"/>
    <property type="project" value="InterPro"/>
</dbReference>
<dbReference type="GO" id="GO:0006412">
    <property type="term" value="P:translation"/>
    <property type="evidence" value="ECO:0007669"/>
    <property type="project" value="UniProtKB-UniRule"/>
</dbReference>
<dbReference type="CDD" id="cd02412">
    <property type="entry name" value="KH-II_30S_S3"/>
    <property type="match status" value="1"/>
</dbReference>
<dbReference type="FunFam" id="3.30.1140.32:FF:000001">
    <property type="entry name" value="30S ribosomal protein S3"/>
    <property type="match status" value="1"/>
</dbReference>
<dbReference type="FunFam" id="3.30.300.20:FF:000001">
    <property type="entry name" value="30S ribosomal protein S3"/>
    <property type="match status" value="1"/>
</dbReference>
<dbReference type="Gene3D" id="3.30.300.20">
    <property type="match status" value="1"/>
</dbReference>
<dbReference type="Gene3D" id="3.30.1140.32">
    <property type="entry name" value="Ribosomal protein S3, C-terminal domain"/>
    <property type="match status" value="1"/>
</dbReference>
<dbReference type="HAMAP" id="MF_01309_B">
    <property type="entry name" value="Ribosomal_uS3_B"/>
    <property type="match status" value="1"/>
</dbReference>
<dbReference type="InterPro" id="IPR004087">
    <property type="entry name" value="KH_dom"/>
</dbReference>
<dbReference type="InterPro" id="IPR015946">
    <property type="entry name" value="KH_dom-like_a/b"/>
</dbReference>
<dbReference type="InterPro" id="IPR004044">
    <property type="entry name" value="KH_dom_type_2"/>
</dbReference>
<dbReference type="InterPro" id="IPR009019">
    <property type="entry name" value="KH_sf_prok-type"/>
</dbReference>
<dbReference type="InterPro" id="IPR036419">
    <property type="entry name" value="Ribosomal_S3_C_sf"/>
</dbReference>
<dbReference type="InterPro" id="IPR005704">
    <property type="entry name" value="Ribosomal_uS3_bac-typ"/>
</dbReference>
<dbReference type="InterPro" id="IPR001351">
    <property type="entry name" value="Ribosomal_uS3_C"/>
</dbReference>
<dbReference type="InterPro" id="IPR018280">
    <property type="entry name" value="Ribosomal_uS3_CS"/>
</dbReference>
<dbReference type="NCBIfam" id="TIGR01009">
    <property type="entry name" value="rpsC_bact"/>
    <property type="match status" value="1"/>
</dbReference>
<dbReference type="PANTHER" id="PTHR11760">
    <property type="entry name" value="30S/40S RIBOSOMAL PROTEIN S3"/>
    <property type="match status" value="1"/>
</dbReference>
<dbReference type="PANTHER" id="PTHR11760:SF19">
    <property type="entry name" value="SMALL RIBOSOMAL SUBUNIT PROTEIN US3C"/>
    <property type="match status" value="1"/>
</dbReference>
<dbReference type="Pfam" id="PF07650">
    <property type="entry name" value="KH_2"/>
    <property type="match status" value="1"/>
</dbReference>
<dbReference type="Pfam" id="PF00189">
    <property type="entry name" value="Ribosomal_S3_C"/>
    <property type="match status" value="1"/>
</dbReference>
<dbReference type="SMART" id="SM00322">
    <property type="entry name" value="KH"/>
    <property type="match status" value="1"/>
</dbReference>
<dbReference type="SUPFAM" id="SSF54814">
    <property type="entry name" value="Prokaryotic type KH domain (KH-domain type II)"/>
    <property type="match status" value="1"/>
</dbReference>
<dbReference type="SUPFAM" id="SSF54821">
    <property type="entry name" value="Ribosomal protein S3 C-terminal domain"/>
    <property type="match status" value="1"/>
</dbReference>
<dbReference type="PROSITE" id="PS50823">
    <property type="entry name" value="KH_TYPE_2"/>
    <property type="match status" value="1"/>
</dbReference>
<dbReference type="PROSITE" id="PS00548">
    <property type="entry name" value="RIBOSOMAL_S3"/>
    <property type="match status" value="1"/>
</dbReference>
<name>RS3_ACIAD</name>
<proteinExistence type="inferred from homology"/>
<protein>
    <recommendedName>
        <fullName evidence="1">Small ribosomal subunit protein uS3</fullName>
    </recommendedName>
    <alternativeName>
        <fullName evidence="3">30S ribosomal protein S3</fullName>
    </alternativeName>
</protein>
<evidence type="ECO:0000255" key="1">
    <source>
        <dbReference type="HAMAP-Rule" id="MF_01309"/>
    </source>
</evidence>
<evidence type="ECO:0000256" key="2">
    <source>
        <dbReference type="SAM" id="MobiDB-lite"/>
    </source>
</evidence>
<evidence type="ECO:0000305" key="3"/>
<reference key="1">
    <citation type="journal article" date="2004" name="Nucleic Acids Res.">
        <title>Unique features revealed by the genome sequence of Acinetobacter sp. ADP1, a versatile and naturally transformation competent bacterium.</title>
        <authorList>
            <person name="Barbe V."/>
            <person name="Vallenet D."/>
            <person name="Fonknechten N."/>
            <person name="Kreimeyer A."/>
            <person name="Oztas S."/>
            <person name="Labarre L."/>
            <person name="Cruveiller S."/>
            <person name="Robert C."/>
            <person name="Duprat S."/>
            <person name="Wincker P."/>
            <person name="Ornston L.N."/>
            <person name="Weissenbach J."/>
            <person name="Marliere P."/>
            <person name="Cohen G.N."/>
            <person name="Medigue C."/>
        </authorList>
    </citation>
    <scope>NUCLEOTIDE SEQUENCE [LARGE SCALE GENOMIC DNA]</scope>
    <source>
        <strain>ATCC 33305 / BD413 / ADP1</strain>
    </source>
</reference>
<comment type="function">
    <text evidence="1">Binds the lower part of the 30S subunit head. Binds mRNA in the 70S ribosome, positioning it for translation.</text>
</comment>
<comment type="subunit">
    <text evidence="1">Part of the 30S ribosomal subunit. Forms a tight complex with proteins S10 and S14.</text>
</comment>
<comment type="similarity">
    <text evidence="1">Belongs to the universal ribosomal protein uS3 family.</text>
</comment>
<feature type="chain" id="PRO_0000130055" description="Small ribosomal subunit protein uS3">
    <location>
        <begin position="1"/>
        <end position="250"/>
    </location>
</feature>
<feature type="domain" description="KH type-2" evidence="1">
    <location>
        <begin position="39"/>
        <end position="107"/>
    </location>
</feature>
<feature type="region of interest" description="Disordered" evidence="2">
    <location>
        <begin position="214"/>
        <end position="250"/>
    </location>
</feature>
<feature type="compositionally biased region" description="Basic and acidic residues" evidence="2">
    <location>
        <begin position="220"/>
        <end position="250"/>
    </location>
</feature>
<keyword id="KW-0687">Ribonucleoprotein</keyword>
<keyword id="KW-0689">Ribosomal protein</keyword>
<keyword id="KW-0694">RNA-binding</keyword>
<keyword id="KW-0699">rRNA-binding</keyword>